<gene>
    <name type="primary">ncs-1</name>
    <name type="ORF">C44C1.3</name>
</gene>
<name>NCS1_CAEEL</name>
<comment type="function">
    <text evidence="5">Neuronal calcium sensor, regulator of G protein-coupled receptor phosphorylation in a calcium dependent manner. Can substitute for calmodulin and directly activate PDE, NO synthase, and calcineurin. Regulates associative learning and memory in a calcium dependent manner.</text>
</comment>
<comment type="subcellular location">
    <subcellularLocation>
        <location evidence="2 3">Membrane</location>
        <topology evidence="2">Lipid-anchor</topology>
    </subcellularLocation>
</comment>
<comment type="miscellaneous">
    <text evidence="1">Binds three calcium ions.</text>
</comment>
<comment type="similarity">
    <text evidence="6">Belongs to the recoverin family.</text>
</comment>
<proteinExistence type="evidence at transcript level"/>
<feature type="initiator methionine" description="Removed" evidence="1">
    <location>
        <position position="1"/>
    </location>
</feature>
<feature type="chain" id="PRO_0000073793" description="Neuronal calcium sensor 1">
    <location>
        <begin position="2"/>
        <end position="191"/>
    </location>
</feature>
<feature type="domain" description="EF-hand 1" evidence="6">
    <location>
        <begin position="24"/>
        <end position="59"/>
    </location>
</feature>
<feature type="domain" description="EF-hand 2" evidence="4">
    <location>
        <begin position="60"/>
        <end position="95"/>
    </location>
</feature>
<feature type="domain" description="EF-hand 3" evidence="4">
    <location>
        <begin position="96"/>
        <end position="131"/>
    </location>
</feature>
<feature type="domain" description="EF-hand 4" evidence="4">
    <location>
        <begin position="144"/>
        <end position="179"/>
    </location>
</feature>
<feature type="binding site" evidence="4">
    <location>
        <position position="73"/>
    </location>
    <ligand>
        <name>Ca(2+)</name>
        <dbReference type="ChEBI" id="CHEBI:29108"/>
        <label>1</label>
    </ligand>
</feature>
<feature type="binding site" evidence="4">
    <location>
        <position position="75"/>
    </location>
    <ligand>
        <name>Ca(2+)</name>
        <dbReference type="ChEBI" id="CHEBI:29108"/>
        <label>1</label>
    </ligand>
</feature>
<feature type="binding site" evidence="4">
    <location>
        <position position="77"/>
    </location>
    <ligand>
        <name>Ca(2+)</name>
        <dbReference type="ChEBI" id="CHEBI:29108"/>
        <label>1</label>
    </ligand>
</feature>
<feature type="binding site" evidence="4">
    <location>
        <position position="79"/>
    </location>
    <ligand>
        <name>Ca(2+)</name>
        <dbReference type="ChEBI" id="CHEBI:29108"/>
        <label>1</label>
    </ligand>
</feature>
<feature type="binding site" evidence="4">
    <location>
        <position position="84"/>
    </location>
    <ligand>
        <name>Ca(2+)</name>
        <dbReference type="ChEBI" id="CHEBI:29108"/>
        <label>1</label>
    </ligand>
</feature>
<feature type="binding site" evidence="4">
    <location>
        <position position="109"/>
    </location>
    <ligand>
        <name>Ca(2+)</name>
        <dbReference type="ChEBI" id="CHEBI:29108"/>
        <label>2</label>
    </ligand>
</feature>
<feature type="binding site" evidence="4">
    <location>
        <position position="111"/>
    </location>
    <ligand>
        <name>Ca(2+)</name>
        <dbReference type="ChEBI" id="CHEBI:29108"/>
        <label>2</label>
    </ligand>
</feature>
<feature type="binding site" evidence="4">
    <location>
        <position position="113"/>
    </location>
    <ligand>
        <name>Ca(2+)</name>
        <dbReference type="ChEBI" id="CHEBI:29108"/>
        <label>2</label>
    </ligand>
</feature>
<feature type="binding site" evidence="4">
    <location>
        <position position="115"/>
    </location>
    <ligand>
        <name>Ca(2+)</name>
        <dbReference type="ChEBI" id="CHEBI:29108"/>
        <label>2</label>
    </ligand>
</feature>
<feature type="binding site" evidence="4">
    <location>
        <position position="120"/>
    </location>
    <ligand>
        <name>Ca(2+)</name>
        <dbReference type="ChEBI" id="CHEBI:29108"/>
        <label>2</label>
    </ligand>
</feature>
<feature type="binding site" evidence="4">
    <location>
        <position position="157"/>
    </location>
    <ligand>
        <name>Ca(2+)</name>
        <dbReference type="ChEBI" id="CHEBI:29108"/>
        <label>3</label>
    </ligand>
</feature>
<feature type="binding site" evidence="4">
    <location>
        <position position="159"/>
    </location>
    <ligand>
        <name>Ca(2+)</name>
        <dbReference type="ChEBI" id="CHEBI:29108"/>
        <label>3</label>
    </ligand>
</feature>
<feature type="binding site" evidence="4">
    <location>
        <position position="161"/>
    </location>
    <ligand>
        <name>Ca(2+)</name>
        <dbReference type="ChEBI" id="CHEBI:29108"/>
        <label>3</label>
    </ligand>
</feature>
<feature type="binding site" evidence="4">
    <location>
        <position position="163"/>
    </location>
    <ligand>
        <name>Ca(2+)</name>
        <dbReference type="ChEBI" id="CHEBI:29108"/>
        <label>3</label>
    </ligand>
</feature>
<feature type="binding site">
    <location>
        <position position="168"/>
    </location>
    <ligand>
        <name>Ca(2+)</name>
        <dbReference type="ChEBI" id="CHEBI:29108"/>
        <label>3</label>
    </ligand>
</feature>
<feature type="lipid moiety-binding region" description="N-myristoyl glycine" evidence="1">
    <location>
        <position position="2"/>
    </location>
</feature>
<keyword id="KW-0106">Calcium</keyword>
<keyword id="KW-0449">Lipoprotein</keyword>
<keyword id="KW-0472">Membrane</keyword>
<keyword id="KW-0479">Metal-binding</keyword>
<keyword id="KW-0519">Myristate</keyword>
<keyword id="KW-1185">Reference proteome</keyword>
<keyword id="KW-0677">Repeat</keyword>
<protein>
    <recommendedName>
        <fullName>Neuronal calcium sensor 1</fullName>
        <shortName>NCS-1</shortName>
    </recommendedName>
</protein>
<organism>
    <name type="scientific">Caenorhabditis elegans</name>
    <dbReference type="NCBI Taxonomy" id="6239"/>
    <lineage>
        <taxon>Eukaryota</taxon>
        <taxon>Metazoa</taxon>
        <taxon>Ecdysozoa</taxon>
        <taxon>Nematoda</taxon>
        <taxon>Chromadorea</taxon>
        <taxon>Rhabditida</taxon>
        <taxon>Rhabditina</taxon>
        <taxon>Rhabditomorpha</taxon>
        <taxon>Rhabditoidea</taxon>
        <taxon>Rhabditidae</taxon>
        <taxon>Peloderinae</taxon>
        <taxon>Caenorhabditis</taxon>
    </lineage>
</organism>
<dbReference type="EMBL" id="L33680">
    <property type="protein sequence ID" value="AAA85631.1"/>
    <property type="molecule type" value="mRNA"/>
</dbReference>
<dbReference type="EMBL" id="FO080474">
    <property type="protein sequence ID" value="CCD63971.1"/>
    <property type="molecule type" value="Genomic_DNA"/>
</dbReference>
<dbReference type="PIR" id="T29566">
    <property type="entry name" value="T29566"/>
</dbReference>
<dbReference type="RefSeq" id="NP_508186.1">
    <property type="nucleotide sequence ID" value="NM_075785.4"/>
</dbReference>
<dbReference type="SMR" id="P36608"/>
<dbReference type="FunCoup" id="P36608">
    <property type="interactions" value="358"/>
</dbReference>
<dbReference type="STRING" id="6239.C44C1.3.1"/>
<dbReference type="PaxDb" id="6239-C44C1.3"/>
<dbReference type="PeptideAtlas" id="P36608"/>
<dbReference type="EnsemblMetazoa" id="C44C1.3.1">
    <property type="protein sequence ID" value="C44C1.3.1"/>
    <property type="gene ID" value="WBGene00003563"/>
</dbReference>
<dbReference type="GeneID" id="180448"/>
<dbReference type="KEGG" id="cel:CELE_C44C1.3"/>
<dbReference type="UCSC" id="C44C1.3">
    <property type="organism name" value="c. elegans"/>
</dbReference>
<dbReference type="AGR" id="WB:WBGene00003563"/>
<dbReference type="CTD" id="180448"/>
<dbReference type="WormBase" id="C44C1.3">
    <property type="protein sequence ID" value="CE24845"/>
    <property type="gene ID" value="WBGene00003563"/>
    <property type="gene designation" value="ncs-1"/>
</dbReference>
<dbReference type="eggNOG" id="KOG0044">
    <property type="taxonomic scope" value="Eukaryota"/>
</dbReference>
<dbReference type="GeneTree" id="ENSGT00940000163010"/>
<dbReference type="HOGENOM" id="CLU_072366_1_2_1"/>
<dbReference type="InParanoid" id="P36608"/>
<dbReference type="OMA" id="EYVFNVF"/>
<dbReference type="OrthoDB" id="191686at2759"/>
<dbReference type="PhylomeDB" id="P36608"/>
<dbReference type="PRO" id="PR:P36608"/>
<dbReference type="Proteomes" id="UP000001940">
    <property type="component" value="Chromosome X"/>
</dbReference>
<dbReference type="Bgee" id="WBGene00003563">
    <property type="expression patterns" value="Expressed in larva and 3 other cell types or tissues"/>
</dbReference>
<dbReference type="GO" id="GO:0016020">
    <property type="term" value="C:membrane"/>
    <property type="evidence" value="ECO:0007669"/>
    <property type="project" value="UniProtKB-SubCell"/>
</dbReference>
<dbReference type="GO" id="GO:0043025">
    <property type="term" value="C:neuronal cell body"/>
    <property type="evidence" value="ECO:0000314"/>
    <property type="project" value="WormBase"/>
</dbReference>
<dbReference type="GO" id="GO:0005509">
    <property type="term" value="F:calcium ion binding"/>
    <property type="evidence" value="ECO:0000318"/>
    <property type="project" value="GO_Central"/>
</dbReference>
<dbReference type="GO" id="GO:0008048">
    <property type="term" value="F:calcium sensitive guanylate cyclase activator activity"/>
    <property type="evidence" value="ECO:0000318"/>
    <property type="project" value="GO_Central"/>
</dbReference>
<dbReference type="GO" id="GO:0007635">
    <property type="term" value="P:chemosensory behavior"/>
    <property type="evidence" value="ECO:0000315"/>
    <property type="project" value="UniProtKB"/>
</dbReference>
<dbReference type="GO" id="GO:0006935">
    <property type="term" value="P:chemotaxis"/>
    <property type="evidence" value="ECO:0000315"/>
    <property type="project" value="UniProtKB"/>
</dbReference>
<dbReference type="GO" id="GO:0009966">
    <property type="term" value="P:regulation of signal transduction"/>
    <property type="evidence" value="ECO:0000318"/>
    <property type="project" value="GO_Central"/>
</dbReference>
<dbReference type="GO" id="GO:0010446">
    <property type="term" value="P:response to alkaline pH"/>
    <property type="evidence" value="ECO:0000315"/>
    <property type="project" value="UniProtKB"/>
</dbReference>
<dbReference type="CDD" id="cd00051">
    <property type="entry name" value="EFh"/>
    <property type="match status" value="2"/>
</dbReference>
<dbReference type="FunFam" id="1.10.238.10:FF:000009">
    <property type="entry name" value="Visinin-like protein 1"/>
    <property type="match status" value="1"/>
</dbReference>
<dbReference type="Gene3D" id="1.10.238.10">
    <property type="entry name" value="EF-hand"/>
    <property type="match status" value="1"/>
</dbReference>
<dbReference type="InterPro" id="IPR011992">
    <property type="entry name" value="EF-hand-dom_pair"/>
</dbReference>
<dbReference type="InterPro" id="IPR018247">
    <property type="entry name" value="EF_Hand_1_Ca_BS"/>
</dbReference>
<dbReference type="InterPro" id="IPR002048">
    <property type="entry name" value="EF_hand_dom"/>
</dbReference>
<dbReference type="InterPro" id="IPR028846">
    <property type="entry name" value="Recoverin"/>
</dbReference>
<dbReference type="PANTHER" id="PTHR23055">
    <property type="entry name" value="CALCIUM BINDING PROTEINS"/>
    <property type="match status" value="1"/>
</dbReference>
<dbReference type="PANTHER" id="PTHR23055:SF198">
    <property type="entry name" value="NEURONAL CALCIUM SENSOR 1"/>
    <property type="match status" value="1"/>
</dbReference>
<dbReference type="Pfam" id="PF13499">
    <property type="entry name" value="EF-hand_7"/>
    <property type="match status" value="1"/>
</dbReference>
<dbReference type="Pfam" id="PF13833">
    <property type="entry name" value="EF-hand_8"/>
    <property type="match status" value="1"/>
</dbReference>
<dbReference type="PRINTS" id="PR00450">
    <property type="entry name" value="RECOVERIN"/>
</dbReference>
<dbReference type="SMART" id="SM00054">
    <property type="entry name" value="EFh"/>
    <property type="match status" value="3"/>
</dbReference>
<dbReference type="SUPFAM" id="SSF47473">
    <property type="entry name" value="EF-hand"/>
    <property type="match status" value="1"/>
</dbReference>
<dbReference type="PROSITE" id="PS00018">
    <property type="entry name" value="EF_HAND_1"/>
    <property type="match status" value="2"/>
</dbReference>
<dbReference type="PROSITE" id="PS50222">
    <property type="entry name" value="EF_HAND_2"/>
    <property type="match status" value="3"/>
</dbReference>
<accession>P36608</accession>
<accession>Q18608</accession>
<reference key="1">
    <citation type="journal article" date="1995" name="Biochem. Biophys. Res. Commun.">
        <title>Regulation of rhodopsin phosphorylation by a family of neuronal calcium sensors.</title>
        <authorList>
            <person name="de Castro E."/>
            <person name="Nef S."/>
            <person name="Fiumelli H."/>
            <person name="Lenz S.E."/>
            <person name="Kawamura S."/>
            <person name="Nef P."/>
        </authorList>
    </citation>
    <scope>NUCLEOTIDE SEQUENCE [MRNA]</scope>
    <source>
        <strain>Bristol N2</strain>
    </source>
</reference>
<reference key="2">
    <citation type="journal article" date="1998" name="Science">
        <title>Genome sequence of the nematode C. elegans: a platform for investigating biology.</title>
        <authorList>
            <consortium name="The C. elegans sequencing consortium"/>
        </authorList>
    </citation>
    <scope>NUCLEOTIDE SEQUENCE [LARGE SCALE GENOMIC DNA]</scope>
    <source>
        <strain>Bristol N2</strain>
    </source>
</reference>
<reference key="3">
    <citation type="journal article" date="2001" name="Neuron">
        <title>Calcium-signalling via the neuron calcium sensor-1 regulates associative learning and memory in C.elegans.</title>
        <authorList>
            <person name="Gomez M."/>
            <person name="de Castro E."/>
            <person name="Guarin E."/>
            <person name="Sasakura H."/>
            <person name="Kuhara A."/>
            <person name="Mori I."/>
            <person name="Bartfai T."/>
            <person name="Bargmann C.I."/>
            <person name="Nef P."/>
        </authorList>
    </citation>
    <scope>FUNCTION</scope>
</reference>
<sequence length="191" mass="22022">MGKGNSKLKSSQIRDLAEQTYFTEKEIKQWYKGFVRDCPNGMLTEAGFQKIYKQFFPQGDPSDFASFVFKVFDENKDGAIEFHEFIRALSITSRGNLDEKLHWAFKLYDLDQDGFITRNEMLSIVDSIYKMVGSSVQLPEEENTPEKRVDRIFRMMDKNNDAQLTLEEFKEGAKADPSIVHALSLYEGLSS</sequence>
<evidence type="ECO:0000250" key="1"/>
<evidence type="ECO:0000250" key="2">
    <source>
        <dbReference type="UniProtKB" id="P62166"/>
    </source>
</evidence>
<evidence type="ECO:0000250" key="3">
    <source>
        <dbReference type="UniProtKB" id="P62168"/>
    </source>
</evidence>
<evidence type="ECO:0000255" key="4">
    <source>
        <dbReference type="PROSITE-ProRule" id="PRU00448"/>
    </source>
</evidence>
<evidence type="ECO:0000269" key="5">
    <source>
    </source>
</evidence>
<evidence type="ECO:0000305" key="6"/>